<gene>
    <name evidence="1" type="primary">sbmC</name>
    <name type="ordered locus">SARI_00826</name>
</gene>
<accession>A9MLN2</accession>
<organism>
    <name type="scientific">Salmonella arizonae (strain ATCC BAA-731 / CDC346-86 / RSK2980)</name>
    <dbReference type="NCBI Taxonomy" id="41514"/>
    <lineage>
        <taxon>Bacteria</taxon>
        <taxon>Pseudomonadati</taxon>
        <taxon>Pseudomonadota</taxon>
        <taxon>Gammaproteobacteria</taxon>
        <taxon>Enterobacterales</taxon>
        <taxon>Enterobacteriaceae</taxon>
        <taxon>Salmonella</taxon>
    </lineage>
</organism>
<proteinExistence type="inferred from homology"/>
<protein>
    <recommendedName>
        <fullName evidence="1">DNA gyrase inhibitor</fullName>
    </recommendedName>
</protein>
<dbReference type="EMBL" id="CP000880">
    <property type="protein sequence ID" value="ABX20745.1"/>
    <property type="molecule type" value="Genomic_DNA"/>
</dbReference>
<dbReference type="SMR" id="A9MLN2"/>
<dbReference type="STRING" id="41514.SARI_00826"/>
<dbReference type="KEGG" id="ses:SARI_00826"/>
<dbReference type="HOGENOM" id="CLU_113664_3_2_6"/>
<dbReference type="Proteomes" id="UP000002084">
    <property type="component" value="Chromosome"/>
</dbReference>
<dbReference type="GO" id="GO:0005737">
    <property type="term" value="C:cytoplasm"/>
    <property type="evidence" value="ECO:0007669"/>
    <property type="project" value="UniProtKB-SubCell"/>
</dbReference>
<dbReference type="GO" id="GO:0008657">
    <property type="term" value="F:DNA topoisomerase type II (double strand cut, ATP-hydrolyzing) inhibitor activity"/>
    <property type="evidence" value="ECO:0007669"/>
    <property type="project" value="UniProtKB-UniRule"/>
</dbReference>
<dbReference type="Gene3D" id="3.20.80.10">
    <property type="entry name" value="Regulatory factor, effector binding domain"/>
    <property type="match status" value="1"/>
</dbReference>
<dbReference type="HAMAP" id="MF_01896">
    <property type="entry name" value="DNA_gyrase_inhibitor"/>
    <property type="match status" value="1"/>
</dbReference>
<dbReference type="InterPro" id="IPR010499">
    <property type="entry name" value="AraC_E-bd"/>
</dbReference>
<dbReference type="InterPro" id="IPR050908">
    <property type="entry name" value="DNA_gyrase_inhibitor"/>
</dbReference>
<dbReference type="InterPro" id="IPR024911">
    <property type="entry name" value="DNA_gyrase_inhibitor_GyrI"/>
</dbReference>
<dbReference type="InterPro" id="IPR029442">
    <property type="entry name" value="GyrI-like"/>
</dbReference>
<dbReference type="InterPro" id="IPR011256">
    <property type="entry name" value="Reg_factor_effector_dom_sf"/>
</dbReference>
<dbReference type="NCBIfam" id="NF007451">
    <property type="entry name" value="PRK10016.1"/>
    <property type="match status" value="1"/>
</dbReference>
<dbReference type="PANTHER" id="PTHR40055:SF2">
    <property type="entry name" value="DNA GYRASE INHIBITOR"/>
    <property type="match status" value="1"/>
</dbReference>
<dbReference type="PANTHER" id="PTHR40055">
    <property type="entry name" value="TRANSCRIPTIONAL REGULATOR YGIV-RELATED"/>
    <property type="match status" value="1"/>
</dbReference>
<dbReference type="Pfam" id="PF06445">
    <property type="entry name" value="GyrI-like"/>
    <property type="match status" value="1"/>
</dbReference>
<dbReference type="SMART" id="SM00871">
    <property type="entry name" value="AraC_E_bind"/>
    <property type="match status" value="1"/>
</dbReference>
<dbReference type="SUPFAM" id="SSF55136">
    <property type="entry name" value="Probable bacterial effector-binding domain"/>
    <property type="match status" value="1"/>
</dbReference>
<reference key="1">
    <citation type="submission" date="2007-11" db="EMBL/GenBank/DDBJ databases">
        <authorList>
            <consortium name="The Salmonella enterica serovar Arizonae Genome Sequencing Project"/>
            <person name="McClelland M."/>
            <person name="Sanderson E.K."/>
            <person name="Porwollik S."/>
            <person name="Spieth J."/>
            <person name="Clifton W.S."/>
            <person name="Fulton R."/>
            <person name="Chunyan W."/>
            <person name="Wollam A."/>
            <person name="Shah N."/>
            <person name="Pepin K."/>
            <person name="Bhonagiri V."/>
            <person name="Nash W."/>
            <person name="Johnson M."/>
            <person name="Thiruvilangam P."/>
            <person name="Wilson R."/>
        </authorList>
    </citation>
    <scope>NUCLEOTIDE SEQUENCE [LARGE SCALE GENOMIC DNA]</scope>
    <source>
        <strain>ATCC BAA-731 / CDC346-86 / RSK2980</strain>
    </source>
</reference>
<comment type="function">
    <text evidence="1">Inhibits the supercoiling activity of DNA gyrase. Acts by inhibiting DNA gyrase at an early step, prior to (or at the step of) binding of DNA by the gyrase. It protects cells against toxins that target DNA gyrase, by inhibiting activity of these toxins and reducing the formation of lethal double-strand breaks in the cell.</text>
</comment>
<comment type="subunit">
    <text evidence="1">Interacts with DNA gyrase.</text>
</comment>
<comment type="subcellular location">
    <subcellularLocation>
        <location evidence="1">Cytoplasm</location>
    </subcellularLocation>
</comment>
<comment type="similarity">
    <text evidence="1">Belongs to the DNA gyrase inhibitor family.</text>
</comment>
<feature type="chain" id="PRO_0000409705" description="DNA gyrase inhibitor">
    <location>
        <begin position="1"/>
        <end position="155"/>
    </location>
</feature>
<evidence type="ECO:0000255" key="1">
    <source>
        <dbReference type="HAMAP-Rule" id="MF_01896"/>
    </source>
</evidence>
<keyword id="KW-0963">Cytoplasm</keyword>
<keyword id="KW-1185">Reference proteome</keyword>
<keyword id="KW-0346">Stress response</keyword>
<name>SBMC_SALAR</name>
<sequence>MDYEIRQEQKRKIAGFHMVGPWEHTVKQGFKQLMMWVDGKQIVPIEWIAVYYDNPDEVPAEKLRCDTVVSVAENFVLPDNSEGVIVTEIEGGEYATAVARVEDHDFATPWYQFFDALLQDSAYQITSEPCFETYLNNGVEDGYWDIEMYIPVRRK</sequence>